<accession>P02902</accession>
<keyword id="KW-0150">Chloroplast</keyword>
<keyword id="KW-0903">Direct protein sequencing</keyword>
<keyword id="KW-0275">Fatty acid biosynthesis</keyword>
<keyword id="KW-0276">Fatty acid metabolism</keyword>
<keyword id="KW-0444">Lipid biosynthesis</keyword>
<keyword id="KW-0443">Lipid metabolism</keyword>
<keyword id="KW-0596">Phosphopantetheine</keyword>
<keyword id="KW-0597">Phosphoprotein</keyword>
<keyword id="KW-0934">Plastid</keyword>
<keyword id="KW-0809">Transit peptide</keyword>
<gene>
    <name type="primary">ACL1.1</name>
</gene>
<evidence type="ECO:0000250" key="1"/>
<evidence type="ECO:0000255" key="2">
    <source>
        <dbReference type="PROSITE-ProRule" id="PRU00258"/>
    </source>
</evidence>
<evidence type="ECO:0000269" key="3">
    <source ref="2"/>
</evidence>
<evidence type="ECO:0000269" key="4">
    <source ref="3"/>
</evidence>
<evidence type="ECO:0000305" key="5"/>
<dbReference type="EMBL" id="M24425">
    <property type="protein sequence ID" value="AAA32923.1"/>
    <property type="molecule type" value="mRNA"/>
</dbReference>
<dbReference type="EMBL" id="M58753">
    <property type="protein sequence ID" value="AAA32920.1"/>
    <property type="molecule type" value="Genomic_DNA"/>
</dbReference>
<dbReference type="PIR" id="S17927">
    <property type="entry name" value="AYBH"/>
</dbReference>
<dbReference type="SMR" id="P02902"/>
<dbReference type="UniPathway" id="UPA00094"/>
<dbReference type="ExpressionAtlas" id="P02902">
    <property type="expression patterns" value="baseline and differential"/>
</dbReference>
<dbReference type="GO" id="GO:0009507">
    <property type="term" value="C:chloroplast"/>
    <property type="evidence" value="ECO:0007669"/>
    <property type="project" value="UniProtKB-SubCell"/>
</dbReference>
<dbReference type="GO" id="GO:0000036">
    <property type="term" value="F:acyl carrier activity"/>
    <property type="evidence" value="ECO:0007669"/>
    <property type="project" value="InterPro"/>
</dbReference>
<dbReference type="GO" id="GO:0031177">
    <property type="term" value="F:phosphopantetheine binding"/>
    <property type="evidence" value="ECO:0007669"/>
    <property type="project" value="InterPro"/>
</dbReference>
<dbReference type="Gene3D" id="1.10.1200.10">
    <property type="entry name" value="ACP-like"/>
    <property type="match status" value="1"/>
</dbReference>
<dbReference type="HAMAP" id="MF_01217">
    <property type="entry name" value="Acyl_carrier"/>
    <property type="match status" value="1"/>
</dbReference>
<dbReference type="InterPro" id="IPR003231">
    <property type="entry name" value="ACP"/>
</dbReference>
<dbReference type="InterPro" id="IPR036736">
    <property type="entry name" value="ACP-like_sf"/>
</dbReference>
<dbReference type="InterPro" id="IPR044813">
    <property type="entry name" value="ACP_chloroplastic"/>
</dbReference>
<dbReference type="InterPro" id="IPR020806">
    <property type="entry name" value="PKS_PP-bd"/>
</dbReference>
<dbReference type="InterPro" id="IPR009081">
    <property type="entry name" value="PP-bd_ACP"/>
</dbReference>
<dbReference type="InterPro" id="IPR006162">
    <property type="entry name" value="Ppantetheine_attach_site"/>
</dbReference>
<dbReference type="NCBIfam" id="TIGR00517">
    <property type="entry name" value="acyl_carrier"/>
    <property type="match status" value="1"/>
</dbReference>
<dbReference type="NCBIfam" id="NF002148">
    <property type="entry name" value="PRK00982.1-2"/>
    <property type="match status" value="1"/>
</dbReference>
<dbReference type="PANTHER" id="PTHR46153">
    <property type="entry name" value="ACYL CARRIER PROTEIN"/>
    <property type="match status" value="1"/>
</dbReference>
<dbReference type="PANTHER" id="PTHR46153:SF20">
    <property type="entry name" value="ACYL CARRIER PROTEIN 2, CHLOROPLASTIC-RELATED"/>
    <property type="match status" value="1"/>
</dbReference>
<dbReference type="Pfam" id="PF00550">
    <property type="entry name" value="PP-binding"/>
    <property type="match status" value="1"/>
</dbReference>
<dbReference type="SMART" id="SM00823">
    <property type="entry name" value="PKS_PP"/>
    <property type="match status" value="1"/>
</dbReference>
<dbReference type="SUPFAM" id="SSF47336">
    <property type="entry name" value="ACP-like"/>
    <property type="match status" value="1"/>
</dbReference>
<dbReference type="PROSITE" id="PS50075">
    <property type="entry name" value="CARRIER"/>
    <property type="match status" value="1"/>
</dbReference>
<dbReference type="PROSITE" id="PS00012">
    <property type="entry name" value="PHOSPHOPANTETHEINE"/>
    <property type="match status" value="1"/>
</dbReference>
<name>ACP1_HORVU</name>
<protein>
    <recommendedName>
        <fullName>Acyl carrier protein 1, chloroplastic</fullName>
        <shortName>ACP I</shortName>
        <shortName>Acyl carrier protein I</shortName>
    </recommendedName>
</protein>
<proteinExistence type="evidence at protein level"/>
<feature type="transit peptide" description="Chloroplast" evidence="4">
    <location>
        <begin position="1"/>
        <end position="59"/>
    </location>
</feature>
<feature type="chain" id="PRO_0000000581" description="Acyl carrier protein 1, chloroplastic">
    <location>
        <begin position="60"/>
        <end position="149"/>
    </location>
</feature>
<feature type="domain" description="Carrier" evidence="2">
    <location>
        <begin position="69"/>
        <end position="144"/>
    </location>
</feature>
<feature type="modified residue" description="O-(pantetheine 4'-phosphoryl)serine" evidence="2 3 4">
    <location>
        <position position="104"/>
    </location>
</feature>
<comment type="function">
    <text>Carrier of the growing fatty acid chain in fatty acid biosynthesis.</text>
</comment>
<comment type="pathway">
    <text>Lipid metabolism; fatty acid biosynthesis.</text>
</comment>
<comment type="subcellular location">
    <subcellularLocation>
        <location>Plastid</location>
        <location>Chloroplast</location>
    </subcellularLocation>
</comment>
<comment type="PTM">
    <text evidence="1">4'-phosphopantetheine is transferred from CoA to a specific serine of apo-ACP by acpS. This modification is essential for activity because fatty acids are bound in thioester linkage to the sulfhydryl of the prosthetic group (By similarity).</text>
</comment>
<comment type="similarity">
    <text evidence="5">Belongs to the acyl carrier protein (ACP) family.</text>
</comment>
<reference key="1">
    <citation type="journal article" date="1991" name="Mol. Gen. Genet.">
        <title>The barley genes Acl1 and Acl3 encoding acyl carrier proteins I and III are located on different chromosomes.</title>
        <authorList>
            <person name="Hansen L."/>
            <person name="von Wettstein-Knowles P."/>
        </authorList>
    </citation>
    <scope>NUCLEOTIDE SEQUENCE [GENOMIC DNA]</scope>
</reference>
<reference key="2">
    <citation type="journal article" date="1987" name="Carlsberg Res. Commun.">
        <title>Three cDNA clones for barley leaf acyl carrier proteins I and III.</title>
        <authorList>
            <person name="Hansen L."/>
        </authorList>
    </citation>
    <scope>NUCLEOTIDE SEQUENCE</scope>
    <scope>PHOSPHOPANTETHEINYLATION AT SER-104</scope>
</reference>
<reference key="3">
    <citation type="journal article" date="1983" name="Carlsberg Res. Commun.">
        <title>Barley acyl carrier protein: its amino acid sequence and assay using purified malonyl-CoA:ACP transacylase.</title>
        <authorList>
            <person name="Hoej P.B."/>
            <person name="Svendsen I."/>
        </authorList>
    </citation>
    <scope>PROTEIN SEQUENCE OF 60-131</scope>
    <scope>PHOSPHOPANTETHEINYLATION AT SER-104</scope>
</reference>
<sequence>MAHCLAAVSSFSPSAVRRRLSSQVANVVSSRSSVSFHSRQMSFVSISSRPSSLRFKICCAAMGEAQAKKETVDKVCMIVKKQLAVPDGTPVTAESKFSELGADSLDTVEIVMGLEEEFNITVDETSAQDIATVQDAANLIEKLVTEKTA</sequence>
<organism>
    <name type="scientific">Hordeum vulgare</name>
    <name type="common">Barley</name>
    <dbReference type="NCBI Taxonomy" id="4513"/>
    <lineage>
        <taxon>Eukaryota</taxon>
        <taxon>Viridiplantae</taxon>
        <taxon>Streptophyta</taxon>
        <taxon>Embryophyta</taxon>
        <taxon>Tracheophyta</taxon>
        <taxon>Spermatophyta</taxon>
        <taxon>Magnoliopsida</taxon>
        <taxon>Liliopsida</taxon>
        <taxon>Poales</taxon>
        <taxon>Poaceae</taxon>
        <taxon>BOP clade</taxon>
        <taxon>Pooideae</taxon>
        <taxon>Triticodae</taxon>
        <taxon>Triticeae</taxon>
        <taxon>Hordeinae</taxon>
        <taxon>Hordeum</taxon>
    </lineage>
</organism>